<name>RS113_ARATH</name>
<dbReference type="EMBL" id="L07877">
    <property type="protein sequence ID" value="AAA32867.1"/>
    <property type="molecule type" value="mRNA"/>
</dbReference>
<dbReference type="EMBL" id="AB005244">
    <property type="protein sequence ID" value="BAB10047.1"/>
    <property type="molecule type" value="Genomic_DNA"/>
</dbReference>
<dbReference type="EMBL" id="CP002688">
    <property type="protein sequence ID" value="AED93206.1"/>
    <property type="molecule type" value="Genomic_DNA"/>
</dbReference>
<dbReference type="EMBL" id="AF360280">
    <property type="protein sequence ID" value="AAK25990.1"/>
    <property type="molecule type" value="mRNA"/>
</dbReference>
<dbReference type="EMBL" id="AY062955">
    <property type="protein sequence ID" value="AAL33787.1"/>
    <property type="molecule type" value="mRNA"/>
</dbReference>
<dbReference type="EMBL" id="AY087240">
    <property type="protein sequence ID" value="AAM64796.1"/>
    <property type="molecule type" value="mRNA"/>
</dbReference>
<dbReference type="RefSeq" id="NP_197763.1">
    <property type="nucleotide sequence ID" value="NM_122279.4"/>
</dbReference>
<dbReference type="SMR" id="P42733"/>
<dbReference type="BioGRID" id="17714">
    <property type="interactions" value="173"/>
</dbReference>
<dbReference type="FunCoup" id="P42733">
    <property type="interactions" value="3495"/>
</dbReference>
<dbReference type="STRING" id="3702.P42733"/>
<dbReference type="iPTMnet" id="P42733"/>
<dbReference type="PaxDb" id="3702-AT5G23740.1"/>
<dbReference type="ProteomicsDB" id="226561"/>
<dbReference type="EnsemblPlants" id="AT5G23740.1">
    <property type="protein sequence ID" value="AT5G23740.1"/>
    <property type="gene ID" value="AT5G23740"/>
</dbReference>
<dbReference type="GeneID" id="832439"/>
<dbReference type="Gramene" id="AT5G23740.1">
    <property type="protein sequence ID" value="AT5G23740.1"/>
    <property type="gene ID" value="AT5G23740"/>
</dbReference>
<dbReference type="KEGG" id="ath:AT5G23740"/>
<dbReference type="Araport" id="AT5G23740"/>
<dbReference type="TAIR" id="AT5G23740">
    <property type="gene designation" value="RPS11-BETA"/>
</dbReference>
<dbReference type="eggNOG" id="KOG1728">
    <property type="taxonomic scope" value="Eukaryota"/>
</dbReference>
<dbReference type="HOGENOM" id="CLU_073626_0_2_1"/>
<dbReference type="InParanoid" id="P42733"/>
<dbReference type="OMA" id="HLYPCFR"/>
<dbReference type="OrthoDB" id="1890621at2759"/>
<dbReference type="PhylomeDB" id="P42733"/>
<dbReference type="CD-CODE" id="4299E36E">
    <property type="entry name" value="Nucleolus"/>
</dbReference>
<dbReference type="PRO" id="PR:P42733"/>
<dbReference type="Proteomes" id="UP000006548">
    <property type="component" value="Chromosome 5"/>
</dbReference>
<dbReference type="ExpressionAtlas" id="P42733">
    <property type="expression patterns" value="baseline and differential"/>
</dbReference>
<dbReference type="GO" id="GO:0009536">
    <property type="term" value="C:plastid"/>
    <property type="evidence" value="ECO:0007005"/>
    <property type="project" value="TAIR"/>
</dbReference>
<dbReference type="GO" id="GO:1990904">
    <property type="term" value="C:ribonucleoprotein complex"/>
    <property type="evidence" value="ECO:0007669"/>
    <property type="project" value="UniProtKB-KW"/>
</dbReference>
<dbReference type="GO" id="GO:0005840">
    <property type="term" value="C:ribosome"/>
    <property type="evidence" value="ECO:0007669"/>
    <property type="project" value="UniProtKB-KW"/>
</dbReference>
<dbReference type="GO" id="GO:0003729">
    <property type="term" value="F:mRNA binding"/>
    <property type="evidence" value="ECO:0000314"/>
    <property type="project" value="TAIR"/>
</dbReference>
<dbReference type="GO" id="GO:0019843">
    <property type="term" value="F:rRNA binding"/>
    <property type="evidence" value="ECO:0007669"/>
    <property type="project" value="UniProtKB-KW"/>
</dbReference>
<dbReference type="GO" id="GO:0003735">
    <property type="term" value="F:structural constituent of ribosome"/>
    <property type="evidence" value="ECO:0007669"/>
    <property type="project" value="InterPro"/>
</dbReference>
<dbReference type="GO" id="GO:0006412">
    <property type="term" value="P:translation"/>
    <property type="evidence" value="ECO:0007669"/>
    <property type="project" value="InterPro"/>
</dbReference>
<dbReference type="CDD" id="cd00364">
    <property type="entry name" value="Ribosomal_uS17"/>
    <property type="match status" value="1"/>
</dbReference>
<dbReference type="FunFam" id="2.40.50.1000:FF:000003">
    <property type="entry name" value="40S ribosomal protein S11"/>
    <property type="match status" value="1"/>
</dbReference>
<dbReference type="Gene3D" id="2.40.50.1000">
    <property type="match status" value="1"/>
</dbReference>
<dbReference type="InterPro" id="IPR012340">
    <property type="entry name" value="NA-bd_OB-fold"/>
</dbReference>
<dbReference type="InterPro" id="IPR000266">
    <property type="entry name" value="Ribosomal_uS17"/>
</dbReference>
<dbReference type="InterPro" id="IPR028333">
    <property type="entry name" value="Ribosomal_uS17_arc/euk"/>
</dbReference>
<dbReference type="InterPro" id="IPR019979">
    <property type="entry name" value="Ribosomal_uS17_CS"/>
</dbReference>
<dbReference type="InterPro" id="IPR032440">
    <property type="entry name" value="Ribosomal_uS17_N"/>
</dbReference>
<dbReference type="NCBIfam" id="NF006345">
    <property type="entry name" value="PRK08572.1"/>
    <property type="match status" value="1"/>
</dbReference>
<dbReference type="NCBIfam" id="TIGR03630">
    <property type="entry name" value="uS17_arch"/>
    <property type="match status" value="1"/>
</dbReference>
<dbReference type="PANTHER" id="PTHR10744">
    <property type="entry name" value="40S RIBOSOMAL PROTEIN S11 FAMILY MEMBER"/>
    <property type="match status" value="1"/>
</dbReference>
<dbReference type="PANTHER" id="PTHR10744:SF47">
    <property type="entry name" value="SMALL RIBOSOMAL SUBUNIT PROTEIN US17X-RELATED"/>
    <property type="match status" value="1"/>
</dbReference>
<dbReference type="Pfam" id="PF00366">
    <property type="entry name" value="Ribosomal_S17"/>
    <property type="match status" value="1"/>
</dbReference>
<dbReference type="Pfam" id="PF16205">
    <property type="entry name" value="Ribosomal_S17_N"/>
    <property type="match status" value="1"/>
</dbReference>
<dbReference type="PRINTS" id="PR00973">
    <property type="entry name" value="RIBOSOMALS17"/>
</dbReference>
<dbReference type="SUPFAM" id="SSF50249">
    <property type="entry name" value="Nucleic acid-binding proteins"/>
    <property type="match status" value="1"/>
</dbReference>
<dbReference type="PROSITE" id="PS00056">
    <property type="entry name" value="RIBOSOMAL_S17"/>
    <property type="match status" value="1"/>
</dbReference>
<accession>P42733</accession>
<accession>Q9FFA6</accession>
<evidence type="ECO:0000303" key="1">
    <source>
    </source>
</evidence>
<evidence type="ECO:0000305" key="2"/>
<comment type="subcellular location">
    <subcellularLocation>
        <location>Cytoplasm</location>
    </subcellularLocation>
</comment>
<comment type="similarity">
    <text evidence="2">Belongs to the universal ribosomal protein uS17 family.</text>
</comment>
<reference key="1">
    <citation type="journal article" date="1993" name="Plant Physiol.">
        <title>A cDNA for Arabidopsis cytosol ribosomal protein S11.</title>
        <authorList>
            <person name="Lu G."/>
            <person name="Wu K."/>
            <person name="Ferl R.J."/>
        </authorList>
    </citation>
    <scope>NUCLEOTIDE SEQUENCE [MRNA]</scope>
</reference>
<reference key="2">
    <citation type="journal article" date="1997" name="DNA Res.">
        <title>Structural analysis of Arabidopsis thaliana chromosome 5. I. Sequence features of the 1.6 Mb regions covered by twenty physically assigned P1 clones.</title>
        <authorList>
            <person name="Sato S."/>
            <person name="Kotani H."/>
            <person name="Nakamura Y."/>
            <person name="Kaneko T."/>
            <person name="Asamizu E."/>
            <person name="Fukami M."/>
            <person name="Miyajima N."/>
            <person name="Tabata S."/>
        </authorList>
    </citation>
    <scope>NUCLEOTIDE SEQUENCE [LARGE SCALE GENOMIC DNA]</scope>
    <source>
        <strain>cv. Columbia</strain>
    </source>
</reference>
<reference key="3">
    <citation type="journal article" date="2017" name="Plant J.">
        <title>Araport11: a complete reannotation of the Arabidopsis thaliana reference genome.</title>
        <authorList>
            <person name="Cheng C.Y."/>
            <person name="Krishnakumar V."/>
            <person name="Chan A.P."/>
            <person name="Thibaud-Nissen F."/>
            <person name="Schobel S."/>
            <person name="Town C.D."/>
        </authorList>
    </citation>
    <scope>GENOME REANNOTATION</scope>
    <source>
        <strain>cv. Columbia</strain>
    </source>
</reference>
<reference key="4">
    <citation type="journal article" date="2003" name="Science">
        <title>Empirical analysis of transcriptional activity in the Arabidopsis genome.</title>
        <authorList>
            <person name="Yamada K."/>
            <person name="Lim J."/>
            <person name="Dale J.M."/>
            <person name="Chen H."/>
            <person name="Shinn P."/>
            <person name="Palm C.J."/>
            <person name="Southwick A.M."/>
            <person name="Wu H.C."/>
            <person name="Kim C.J."/>
            <person name="Nguyen M."/>
            <person name="Pham P.K."/>
            <person name="Cheuk R.F."/>
            <person name="Karlin-Newmann G."/>
            <person name="Liu S.X."/>
            <person name="Lam B."/>
            <person name="Sakano H."/>
            <person name="Wu T."/>
            <person name="Yu G."/>
            <person name="Miranda M."/>
            <person name="Quach H.L."/>
            <person name="Tripp M."/>
            <person name="Chang C.H."/>
            <person name="Lee J.M."/>
            <person name="Toriumi M.J."/>
            <person name="Chan M.M."/>
            <person name="Tang C.C."/>
            <person name="Onodera C.S."/>
            <person name="Deng J.M."/>
            <person name="Akiyama K."/>
            <person name="Ansari Y."/>
            <person name="Arakawa T."/>
            <person name="Banh J."/>
            <person name="Banno F."/>
            <person name="Bowser L."/>
            <person name="Brooks S.Y."/>
            <person name="Carninci P."/>
            <person name="Chao Q."/>
            <person name="Choy N."/>
            <person name="Enju A."/>
            <person name="Goldsmith A.D."/>
            <person name="Gurjal M."/>
            <person name="Hansen N.F."/>
            <person name="Hayashizaki Y."/>
            <person name="Johnson-Hopson C."/>
            <person name="Hsuan V.W."/>
            <person name="Iida K."/>
            <person name="Karnes M."/>
            <person name="Khan S."/>
            <person name="Koesema E."/>
            <person name="Ishida J."/>
            <person name="Jiang P.X."/>
            <person name="Jones T."/>
            <person name="Kawai J."/>
            <person name="Kamiya A."/>
            <person name="Meyers C."/>
            <person name="Nakajima M."/>
            <person name="Narusaka M."/>
            <person name="Seki M."/>
            <person name="Sakurai T."/>
            <person name="Satou M."/>
            <person name="Tamse R."/>
            <person name="Vaysberg M."/>
            <person name="Wallender E.K."/>
            <person name="Wong C."/>
            <person name="Yamamura Y."/>
            <person name="Yuan S."/>
            <person name="Shinozaki K."/>
            <person name="Davis R.W."/>
            <person name="Theologis A."/>
            <person name="Ecker J.R."/>
        </authorList>
    </citation>
    <scope>NUCLEOTIDE SEQUENCE [LARGE SCALE MRNA]</scope>
    <source>
        <strain>cv. Columbia</strain>
    </source>
</reference>
<reference key="5">
    <citation type="submission" date="2002-03" db="EMBL/GenBank/DDBJ databases">
        <title>Full-length cDNA from Arabidopsis thaliana.</title>
        <authorList>
            <person name="Brover V.V."/>
            <person name="Troukhan M.E."/>
            <person name="Alexandrov N.A."/>
            <person name="Lu Y.-P."/>
            <person name="Flavell R.B."/>
            <person name="Feldmann K.A."/>
        </authorList>
    </citation>
    <scope>NUCLEOTIDE SEQUENCE [LARGE SCALE MRNA]</scope>
</reference>
<reference key="6">
    <citation type="journal article" date="2001" name="Plant Physiol.">
        <title>The organization of cytoplasmic ribosomal protein genes in the Arabidopsis genome.</title>
        <authorList>
            <person name="Barakat A."/>
            <person name="Szick-Miranda K."/>
            <person name="Chang I.-F."/>
            <person name="Guyot R."/>
            <person name="Blanc G."/>
            <person name="Cooke R."/>
            <person name="Delseny M."/>
            <person name="Bailey-Serres J."/>
        </authorList>
    </citation>
    <scope>GENE FAMILY ORGANIZATION</scope>
    <scope>NOMENCLATURE</scope>
</reference>
<reference key="7">
    <citation type="journal article" date="2023" name="Plant Cell">
        <title>An updated nomenclature for plant ribosomal protein genes.</title>
        <authorList>
            <person name="Scarpin M.R."/>
            <person name="Busche M."/>
            <person name="Martinez R.E."/>
            <person name="Harper L.C."/>
            <person name="Reiser L."/>
            <person name="Szakonyi D."/>
            <person name="Merchante C."/>
            <person name="Lan T."/>
            <person name="Xiong W."/>
            <person name="Mo B."/>
            <person name="Tang G."/>
            <person name="Chen X."/>
            <person name="Bailey-Serres J."/>
            <person name="Browning K.S."/>
            <person name="Brunkard J.O."/>
        </authorList>
    </citation>
    <scope>NOMENCLATURE</scope>
</reference>
<feature type="chain" id="PRO_0000128517" description="Small ribosomal subunit protein uS17x">
    <location>
        <begin position="1"/>
        <end position="159"/>
    </location>
</feature>
<feature type="sequence conflict" description="In Ref. 1; AAA32867." evidence="2" ref="1">
    <original>N</original>
    <variation>D</variation>
    <location>
        <position position="90"/>
    </location>
</feature>
<feature type="sequence conflict" description="In Ref. 1; AAA32867." evidence="2" ref="1">
    <original>Q</original>
    <variation>P</variation>
    <location>
        <position position="99"/>
    </location>
</feature>
<feature type="sequence conflict" description="In Ref. 1; AAA32867." evidence="2" ref="1">
    <original>N</original>
    <variation>H</variation>
    <location>
        <position position="107"/>
    </location>
</feature>
<feature type="sequence conflict" description="In Ref. 1; AAA32867." evidence="2" ref="1">
    <original>A</original>
    <variation>T</variation>
    <location>
        <position position="146"/>
    </location>
</feature>
<feature type="sequence conflict" description="In Ref. 1; AAA32867." evidence="2" ref="1">
    <original>F</original>
    <variation>L</variation>
    <location>
        <position position="156"/>
    </location>
</feature>
<gene>
    <name type="primary">RPS11C</name>
    <name type="ordered locus">At5g23740</name>
    <name type="ORF">MRO11.22</name>
</gene>
<protein>
    <recommendedName>
        <fullName evidence="1">Small ribosomal subunit protein uS17x</fullName>
    </recommendedName>
    <alternativeName>
        <fullName>40S ribosomal protein S11-3</fullName>
    </alternativeName>
</protein>
<organism>
    <name type="scientific">Arabidopsis thaliana</name>
    <name type="common">Mouse-ear cress</name>
    <dbReference type="NCBI Taxonomy" id="3702"/>
    <lineage>
        <taxon>Eukaryota</taxon>
        <taxon>Viridiplantae</taxon>
        <taxon>Streptophyta</taxon>
        <taxon>Embryophyta</taxon>
        <taxon>Tracheophyta</taxon>
        <taxon>Spermatophyta</taxon>
        <taxon>Magnoliopsida</taxon>
        <taxon>eudicotyledons</taxon>
        <taxon>Gunneridae</taxon>
        <taxon>Pentapetalae</taxon>
        <taxon>rosids</taxon>
        <taxon>malvids</taxon>
        <taxon>Brassicales</taxon>
        <taxon>Brassicaceae</taxon>
        <taxon>Camelineae</taxon>
        <taxon>Arabidopsis</taxon>
    </lineage>
</organism>
<sequence>MAEQTEKAFLKQPKVFLSSKISGKGKRPGKGGNRFWKNIGLGFKTPREAIDGAYIDSKCPFTGTVSIRGRILAGTCHSAKMQRTIIVRRNYLHFVKKYQRYEKRHSNIPAHVSPCFRVKEGDHVIIGQCRPLSKTVRFNVLKVIPAGASAFGKKAFTGV</sequence>
<keyword id="KW-0963">Cytoplasm</keyword>
<keyword id="KW-1185">Reference proteome</keyword>
<keyword id="KW-0687">Ribonucleoprotein</keyword>
<keyword id="KW-0689">Ribosomal protein</keyword>
<keyword id="KW-0694">RNA-binding</keyword>
<keyword id="KW-0699">rRNA-binding</keyword>
<proteinExistence type="evidence at transcript level"/>